<proteinExistence type="inferred from homology"/>
<accession>Q89YP0</accession>
<organism>
    <name type="scientific">Bacteroides thetaiotaomicron (strain ATCC 29148 / DSM 2079 / JCM 5827 / CCUG 10774 / NCTC 10582 / VPI-5482 / E50)</name>
    <dbReference type="NCBI Taxonomy" id="226186"/>
    <lineage>
        <taxon>Bacteria</taxon>
        <taxon>Pseudomonadati</taxon>
        <taxon>Bacteroidota</taxon>
        <taxon>Bacteroidia</taxon>
        <taxon>Bacteroidales</taxon>
        <taxon>Bacteroidaceae</taxon>
        <taxon>Bacteroides</taxon>
    </lineage>
</organism>
<reference key="1">
    <citation type="journal article" date="2003" name="Science">
        <title>A genomic view of the human-Bacteroides thetaiotaomicron symbiosis.</title>
        <authorList>
            <person name="Xu J."/>
            <person name="Bjursell M.K."/>
            <person name="Himrod J."/>
            <person name="Deng S."/>
            <person name="Carmichael L.K."/>
            <person name="Chiang H.C."/>
            <person name="Hooper L.V."/>
            <person name="Gordon J.I."/>
        </authorList>
    </citation>
    <scope>NUCLEOTIDE SEQUENCE [LARGE SCALE GENOMIC DNA]</scope>
    <source>
        <strain>ATCC 29148 / DSM 2079 / JCM 5827 / CCUG 10774 / NCTC 10582 / VPI-5482 / E50</strain>
    </source>
</reference>
<evidence type="ECO:0000255" key="1">
    <source>
        <dbReference type="HAMAP-Rule" id="MF_01848"/>
    </source>
</evidence>
<keyword id="KW-0963">Cytoplasm</keyword>
<keyword id="KW-0489">Methyltransferase</keyword>
<keyword id="KW-1185">Reference proteome</keyword>
<keyword id="KW-0698">rRNA processing</keyword>
<keyword id="KW-0949">S-adenosyl-L-methionine</keyword>
<keyword id="KW-0808">Transferase</keyword>
<gene>
    <name evidence="1" type="primary">rlmF</name>
    <name type="ordered locus">BT_4691</name>
</gene>
<name>RLMF_BACTN</name>
<dbReference type="EC" id="2.1.1.181" evidence="1"/>
<dbReference type="EMBL" id="AE015928">
    <property type="protein sequence ID" value="AAO79796.1"/>
    <property type="molecule type" value="Genomic_DNA"/>
</dbReference>
<dbReference type="RefSeq" id="NP_813602.1">
    <property type="nucleotide sequence ID" value="NC_004663.1"/>
</dbReference>
<dbReference type="RefSeq" id="WP_011109384.1">
    <property type="nucleotide sequence ID" value="NC_004663.1"/>
</dbReference>
<dbReference type="SMR" id="Q89YP0"/>
<dbReference type="FunCoup" id="Q89YP0">
    <property type="interactions" value="253"/>
</dbReference>
<dbReference type="STRING" id="226186.BT_4691"/>
<dbReference type="PaxDb" id="226186-BT_4691"/>
<dbReference type="EnsemblBacteria" id="AAO79796">
    <property type="protein sequence ID" value="AAO79796"/>
    <property type="gene ID" value="BT_4691"/>
</dbReference>
<dbReference type="GeneID" id="60925863"/>
<dbReference type="KEGG" id="bth:BT_4691"/>
<dbReference type="PATRIC" id="fig|226186.12.peg.4770"/>
<dbReference type="eggNOG" id="COG3129">
    <property type="taxonomic scope" value="Bacteria"/>
</dbReference>
<dbReference type="HOGENOM" id="CLU_027534_3_0_10"/>
<dbReference type="InParanoid" id="Q89YP0"/>
<dbReference type="OrthoDB" id="1115728at2"/>
<dbReference type="Proteomes" id="UP000001414">
    <property type="component" value="Chromosome"/>
</dbReference>
<dbReference type="GO" id="GO:0005737">
    <property type="term" value="C:cytoplasm"/>
    <property type="evidence" value="ECO:0007669"/>
    <property type="project" value="UniProtKB-SubCell"/>
</dbReference>
<dbReference type="GO" id="GO:0052907">
    <property type="term" value="F:23S rRNA (adenine(1618)-N(6))-methyltransferase activity"/>
    <property type="evidence" value="ECO:0000318"/>
    <property type="project" value="GO_Central"/>
</dbReference>
<dbReference type="GO" id="GO:0070475">
    <property type="term" value="P:rRNA base methylation"/>
    <property type="evidence" value="ECO:0000318"/>
    <property type="project" value="GO_Central"/>
</dbReference>
<dbReference type="CDD" id="cd02440">
    <property type="entry name" value="AdoMet_MTases"/>
    <property type="match status" value="1"/>
</dbReference>
<dbReference type="FunFam" id="3.40.50.150:FF:000045">
    <property type="entry name" value="Ribosomal RNA large subunit methyltransferase F"/>
    <property type="match status" value="1"/>
</dbReference>
<dbReference type="Gene3D" id="3.40.50.150">
    <property type="entry name" value="Vaccinia Virus protein VP39"/>
    <property type="match status" value="1"/>
</dbReference>
<dbReference type="HAMAP" id="MF_01848">
    <property type="entry name" value="23SrRNA_methyltr_F"/>
    <property type="match status" value="1"/>
</dbReference>
<dbReference type="InterPro" id="IPR010286">
    <property type="entry name" value="METTL16/RlmF"/>
</dbReference>
<dbReference type="InterPro" id="IPR016909">
    <property type="entry name" value="rRNA_lsu_MeTfrase_F"/>
</dbReference>
<dbReference type="InterPro" id="IPR029063">
    <property type="entry name" value="SAM-dependent_MTases_sf"/>
</dbReference>
<dbReference type="NCBIfam" id="NF008725">
    <property type="entry name" value="PRK11727.1"/>
    <property type="match status" value="1"/>
</dbReference>
<dbReference type="PANTHER" id="PTHR13393:SF0">
    <property type="entry name" value="RNA N6-ADENOSINE-METHYLTRANSFERASE METTL16"/>
    <property type="match status" value="1"/>
</dbReference>
<dbReference type="PANTHER" id="PTHR13393">
    <property type="entry name" value="SAM-DEPENDENT METHYLTRANSFERASE"/>
    <property type="match status" value="1"/>
</dbReference>
<dbReference type="Pfam" id="PF05971">
    <property type="entry name" value="Methyltransf_10"/>
    <property type="match status" value="1"/>
</dbReference>
<dbReference type="PIRSF" id="PIRSF029038">
    <property type="entry name" value="Mtase_YbiN_prd"/>
    <property type="match status" value="1"/>
</dbReference>
<dbReference type="SUPFAM" id="SSF53335">
    <property type="entry name" value="S-adenosyl-L-methionine-dependent methyltransferases"/>
    <property type="match status" value="1"/>
</dbReference>
<sequence>MAERSELHTRNKHNGQYDFSLLTENYPPLRKFVLLNPLGIQTIDFFNPHAVKALNKALLISYYGIRYWDIPRNYLCPPIPGRADYVHYIADLIDPERVSNTANEENGDKPKRQCRCLDIGVGANCIYPIIGHVEYGWMFVGSDIDPVSIENARKIVTCNPVLAHKIDLRLQKDNRRIFDGIIAPDEYFDVTICNPPFHSSKKEAEEGTLRKLSSLKGEKVKKTKLNFGGNANELWCEGGELRFLLNMISESRKYRKNCGWFTSLVSKEKNLDKLYAKLKAVHVSEYKIIRMCQGTKNSRILAWRFLE</sequence>
<comment type="function">
    <text evidence="1">Specifically methylates the adenine in position 1618 of 23S rRNA.</text>
</comment>
<comment type="catalytic activity">
    <reaction evidence="1">
        <text>adenosine(1618) in 23S rRNA + S-adenosyl-L-methionine = N(6)-methyladenosine(1618) in 23S rRNA + S-adenosyl-L-homocysteine + H(+)</text>
        <dbReference type="Rhea" id="RHEA:16497"/>
        <dbReference type="Rhea" id="RHEA-COMP:10229"/>
        <dbReference type="Rhea" id="RHEA-COMP:10231"/>
        <dbReference type="ChEBI" id="CHEBI:15378"/>
        <dbReference type="ChEBI" id="CHEBI:57856"/>
        <dbReference type="ChEBI" id="CHEBI:59789"/>
        <dbReference type="ChEBI" id="CHEBI:74411"/>
        <dbReference type="ChEBI" id="CHEBI:74449"/>
        <dbReference type="EC" id="2.1.1.181"/>
    </reaction>
</comment>
<comment type="subcellular location">
    <subcellularLocation>
        <location evidence="1">Cytoplasm</location>
    </subcellularLocation>
</comment>
<comment type="similarity">
    <text evidence="1">Belongs to the methyltransferase superfamily. METTL16/RlmF family.</text>
</comment>
<protein>
    <recommendedName>
        <fullName evidence="1">Ribosomal RNA large subunit methyltransferase F</fullName>
        <ecNumber evidence="1">2.1.1.181</ecNumber>
    </recommendedName>
    <alternativeName>
        <fullName evidence="1">23S rRNA mA1618 methyltransferase</fullName>
    </alternativeName>
    <alternativeName>
        <fullName evidence="1">rRNA adenine N-6-methyltransferase</fullName>
    </alternativeName>
</protein>
<feature type="chain" id="PRO_0000349897" description="Ribosomal RNA large subunit methyltransferase F">
    <location>
        <begin position="1"/>
        <end position="307"/>
    </location>
</feature>